<keyword id="KW-0456">Lyase</keyword>
<keyword id="KW-1185">Reference proteome</keyword>
<name>CYNS_MYCA9</name>
<feature type="chain" id="PRO_1000128230" description="Cyanate hydratase">
    <location>
        <begin position="1"/>
        <end position="156"/>
    </location>
</feature>
<feature type="active site" evidence="1">
    <location>
        <position position="96"/>
    </location>
</feature>
<feature type="active site" evidence="1">
    <location>
        <position position="99"/>
    </location>
</feature>
<feature type="active site" evidence="1">
    <location>
        <position position="122"/>
    </location>
</feature>
<evidence type="ECO:0000255" key="1">
    <source>
        <dbReference type="HAMAP-Rule" id="MF_00535"/>
    </source>
</evidence>
<sequence length="156" mass="16660">MVHAQFDPTSREELAIAAVEAKIAKDLSWQQIADAAGYSPAFVTAAVLGQHPLPPRAADTVAGLLGLGDDAALLLQTIPTRGSIPAGVPTDPTIYRFYEMLQVYGTTLKALIHEQFGDGIISAINFKLDVRKVPDPDGGYRAVVTLDGKYLPTVPF</sequence>
<reference key="1">
    <citation type="journal article" date="2009" name="PLoS ONE">
        <title>Non mycobacterial virulence genes in the genome of the emerging pathogen Mycobacterium abscessus.</title>
        <authorList>
            <person name="Ripoll F."/>
            <person name="Pasek S."/>
            <person name="Schenowitz C."/>
            <person name="Dossat C."/>
            <person name="Barbe V."/>
            <person name="Rottman M."/>
            <person name="Macheras E."/>
            <person name="Heym B."/>
            <person name="Herrmann J.L."/>
            <person name="Daffe M."/>
            <person name="Brosch R."/>
            <person name="Risler J.L."/>
            <person name="Gaillard J.L."/>
        </authorList>
    </citation>
    <scope>NUCLEOTIDE SEQUENCE [LARGE SCALE GENOMIC DNA]</scope>
    <source>
        <strain>ATCC 19977 / DSM 44196 / CCUG 20993 / CIP 104536 / JCM 13569 / NCTC 13031 / TMC 1543 / L948</strain>
    </source>
</reference>
<protein>
    <recommendedName>
        <fullName evidence="1">Cyanate hydratase</fullName>
        <shortName evidence="1">Cyanase</shortName>
        <ecNumber evidence="1">4.2.1.104</ecNumber>
    </recommendedName>
    <alternativeName>
        <fullName evidence="1">Cyanate hydrolase</fullName>
    </alternativeName>
    <alternativeName>
        <fullName evidence="1">Cyanate lyase</fullName>
    </alternativeName>
</protein>
<proteinExistence type="inferred from homology"/>
<organism>
    <name type="scientific">Mycobacteroides abscessus (strain ATCC 19977 / DSM 44196 / CCUG 20993 / CIP 104536 / JCM 13569 / NCTC 13031 / TMC 1543 / L948)</name>
    <name type="common">Mycobacterium abscessus</name>
    <dbReference type="NCBI Taxonomy" id="561007"/>
    <lineage>
        <taxon>Bacteria</taxon>
        <taxon>Bacillati</taxon>
        <taxon>Actinomycetota</taxon>
        <taxon>Actinomycetes</taxon>
        <taxon>Mycobacteriales</taxon>
        <taxon>Mycobacteriaceae</taxon>
        <taxon>Mycobacteroides</taxon>
        <taxon>Mycobacteroides abscessus</taxon>
    </lineage>
</organism>
<comment type="function">
    <text evidence="1">Catalyzes the reaction of cyanate with bicarbonate to produce ammonia and carbon dioxide.</text>
</comment>
<comment type="catalytic activity">
    <reaction evidence="1">
        <text>cyanate + hydrogencarbonate + 3 H(+) = NH4(+) + 2 CO2</text>
        <dbReference type="Rhea" id="RHEA:11120"/>
        <dbReference type="ChEBI" id="CHEBI:15378"/>
        <dbReference type="ChEBI" id="CHEBI:16526"/>
        <dbReference type="ChEBI" id="CHEBI:17544"/>
        <dbReference type="ChEBI" id="CHEBI:28938"/>
        <dbReference type="ChEBI" id="CHEBI:29195"/>
        <dbReference type="EC" id="4.2.1.104"/>
    </reaction>
</comment>
<comment type="similarity">
    <text evidence="1">Belongs to the cyanase family.</text>
</comment>
<dbReference type="EC" id="4.2.1.104" evidence="1"/>
<dbReference type="EMBL" id="CU458896">
    <property type="protein sequence ID" value="CAM60154.1"/>
    <property type="molecule type" value="Genomic_DNA"/>
</dbReference>
<dbReference type="RefSeq" id="WP_005072180.1">
    <property type="nucleotide sequence ID" value="NZ_MLCG01000005.1"/>
</dbReference>
<dbReference type="SMR" id="B1ME90"/>
<dbReference type="GeneID" id="93376997"/>
<dbReference type="KEGG" id="mab:MAB_0054c"/>
<dbReference type="Proteomes" id="UP000007137">
    <property type="component" value="Chromosome"/>
</dbReference>
<dbReference type="GO" id="GO:0008824">
    <property type="term" value="F:cyanate hydratase activity"/>
    <property type="evidence" value="ECO:0007669"/>
    <property type="project" value="UniProtKB-UniRule"/>
</dbReference>
<dbReference type="GO" id="GO:0003677">
    <property type="term" value="F:DNA binding"/>
    <property type="evidence" value="ECO:0007669"/>
    <property type="project" value="InterPro"/>
</dbReference>
<dbReference type="GO" id="GO:0009439">
    <property type="term" value="P:cyanate metabolic process"/>
    <property type="evidence" value="ECO:0007669"/>
    <property type="project" value="UniProtKB-UniRule"/>
</dbReference>
<dbReference type="CDD" id="cd00559">
    <property type="entry name" value="Cyanase_C"/>
    <property type="match status" value="1"/>
</dbReference>
<dbReference type="Gene3D" id="3.30.1160.10">
    <property type="entry name" value="Cyanate lyase, C-terminal domain"/>
    <property type="match status" value="1"/>
</dbReference>
<dbReference type="Gene3D" id="1.10.260.40">
    <property type="entry name" value="lambda repressor-like DNA-binding domains"/>
    <property type="match status" value="1"/>
</dbReference>
<dbReference type="HAMAP" id="MF_00535">
    <property type="entry name" value="Cyanate_hydrat"/>
    <property type="match status" value="1"/>
</dbReference>
<dbReference type="InterPro" id="IPR008076">
    <property type="entry name" value="Cyanase"/>
</dbReference>
<dbReference type="InterPro" id="IPR003712">
    <property type="entry name" value="Cyanate_lyase_C"/>
</dbReference>
<dbReference type="InterPro" id="IPR036581">
    <property type="entry name" value="Cyanate_lyase_C_sf"/>
</dbReference>
<dbReference type="InterPro" id="IPR048564">
    <property type="entry name" value="CYNS_N"/>
</dbReference>
<dbReference type="InterPro" id="IPR010982">
    <property type="entry name" value="Lambda_DNA-bd_dom_sf"/>
</dbReference>
<dbReference type="NCBIfam" id="TIGR00673">
    <property type="entry name" value="cynS"/>
    <property type="match status" value="1"/>
</dbReference>
<dbReference type="NCBIfam" id="NF002773">
    <property type="entry name" value="PRK02866.1"/>
    <property type="match status" value="1"/>
</dbReference>
<dbReference type="PANTHER" id="PTHR34186">
    <property type="entry name" value="CYANATE HYDRATASE"/>
    <property type="match status" value="1"/>
</dbReference>
<dbReference type="PANTHER" id="PTHR34186:SF2">
    <property type="entry name" value="CYANATE HYDRATASE"/>
    <property type="match status" value="1"/>
</dbReference>
<dbReference type="Pfam" id="PF02560">
    <property type="entry name" value="Cyanate_lyase"/>
    <property type="match status" value="1"/>
</dbReference>
<dbReference type="Pfam" id="PF21291">
    <property type="entry name" value="CYNS_N"/>
    <property type="match status" value="1"/>
</dbReference>
<dbReference type="PIRSF" id="PIRSF001263">
    <property type="entry name" value="Cyanate_hydratas"/>
    <property type="match status" value="1"/>
</dbReference>
<dbReference type="PRINTS" id="PR01693">
    <property type="entry name" value="CYANASE"/>
</dbReference>
<dbReference type="SMART" id="SM01116">
    <property type="entry name" value="Cyanate_lyase"/>
    <property type="match status" value="1"/>
</dbReference>
<dbReference type="SUPFAM" id="SSF55234">
    <property type="entry name" value="Cyanase C-terminal domain"/>
    <property type="match status" value="1"/>
</dbReference>
<dbReference type="SUPFAM" id="SSF47413">
    <property type="entry name" value="lambda repressor-like DNA-binding domains"/>
    <property type="match status" value="1"/>
</dbReference>
<gene>
    <name evidence="1" type="primary">cynS</name>
    <name type="ordered locus">MAB_0054c</name>
</gene>
<accession>B1ME90</accession>